<reference key="1">
    <citation type="journal article" date="2002" name="J. Mol. Biol.">
        <title>Bacteriophage Mu genome sequence: analysis and comparison with Mu-like prophages in Haemophilus, Neisseria and Deinococcus.</title>
        <authorList>
            <person name="Morgan G.J."/>
            <person name="Hatfull G.F."/>
            <person name="Casjens S."/>
            <person name="Hendrix R.W."/>
        </authorList>
    </citation>
    <scope>NUCLEOTIDE SEQUENCE [LARGE SCALE GENOMIC DNA]</scope>
</reference>
<reference key="2">
    <citation type="journal article" date="1993" name="Genetics">
        <title>Mutational analysis of a C-dependent late promoter of bacteriophage Mu.</title>
        <authorList>
            <person name="Chiang L.W."/>
            <person name="Howe M.M."/>
        </authorList>
    </citation>
    <scope>INDUCTION</scope>
</reference>
<reference key="3">
    <citation type="journal article" date="2004" name="Arch. Virol.">
        <title>Characterization of Plys-proximal morphogenetic genes of transposable bacteriophage Mu.</title>
        <authorList>
            <person name="Siboo I.R."/>
            <person name="Sieder F."/>
            <person name="Kumar K."/>
            <person name="Howe M.M."/>
            <person name="DuBow M.S."/>
        </authorList>
    </citation>
    <scope>FUNCTION</scope>
    <scope>SUBUNIT</scope>
</reference>
<protein>
    <recommendedName>
        <fullName>Probable terminase, small subunit gp27</fullName>
    </recommendedName>
    <alternativeName>
        <fullName>Gene product 27</fullName>
        <shortName>gp27</shortName>
    </alternativeName>
    <alternativeName>
        <fullName>Gene product D</fullName>
        <shortName>gpD</shortName>
    </alternativeName>
    <alternativeName>
        <fullName>Pacase, small subunit</fullName>
    </alternativeName>
    <alternativeName>
        <fullName>Packaging protein D</fullName>
    </alternativeName>
</protein>
<comment type="function">
    <text evidence="3">The terminase small subunit binds to the packaging initiation site (pac) and regulates the ATPase activity of the terminase large subunit. The terminase lies at a unique vertex of the procapsid and is composed of two subunits, a small terminase subunit involved in viral DNA recognition (packaging sequence), and a large terminase subunit possessing endonucleolytic and ATPase activities. Both terminase subunits heterooligomerize and are docked on the portal protein to form the packaging machine. The terminase large subunit exhibits endonuclease activity and cleaves the viral genome concatemer once the capsid is full (headful packaging). Once the capsid is packaged with the DNA, the terminase complex is substituted by neck proteins.</text>
</comment>
<comment type="subunit">
    <text evidence="3">Heterodimer with the terminase large subunit gp28; the active complex is probably heterooligomeric.</text>
</comment>
<comment type="subcellular location">
    <subcellularLocation>
        <location evidence="2">Host cytoplasm</location>
    </subcellularLocation>
</comment>
<comment type="induction">
    <text evidence="1">Expressed in the late phase of the viral replicative cycle. Expression of late genes is activated by the viral late transcription activator C.</text>
</comment>
<comment type="similarity">
    <text evidence="2">Belongs to the mulikevirus small terminase family.</text>
</comment>
<sequence length="191" mass="21625">MDRKTRGRASKVDLLPENVRKTLHEMLRDKAIPQARILEEINALIEDAGLPDEMKLSRSGLNRYATNVEQVGHNLRQMREMTSALTAELGDKPMGETTKLILEMARSQLFKAMMRQIENPESDVDIDLLKNAMLAAQRLESTAMSSHRREKEIRQAFAEEAANAVSEELRGQDGISEELEQRIRDVLLGKA</sequence>
<name>TERS_BPMU</name>
<organismHost>
    <name type="scientific">Enterobacteriaceae</name>
    <dbReference type="NCBI Taxonomy" id="543"/>
</organismHost>
<evidence type="ECO:0000269" key="1">
    <source>
    </source>
</evidence>
<evidence type="ECO:0000305" key="2"/>
<evidence type="ECO:0000305" key="3">
    <source>
    </source>
</evidence>
<keyword id="KW-0238">DNA-binding</keyword>
<keyword id="KW-1035">Host cytoplasm</keyword>
<keyword id="KW-0426">Late protein</keyword>
<keyword id="KW-1185">Reference proteome</keyword>
<keyword id="KW-1250">Viral genome excision</keyword>
<keyword id="KW-0231">Viral genome packaging</keyword>
<keyword id="KW-1188">Viral release from host cell</keyword>
<gene>
    <name type="ordered locus">Mup27</name>
</gene>
<feature type="chain" id="PRO_0000077820" description="Probable terminase, small subunit gp27">
    <location>
        <begin position="1"/>
        <end position="191"/>
    </location>
</feature>
<accession>Q9T1W7</accession>
<dbReference type="EMBL" id="AF083977">
    <property type="protein sequence ID" value="AAF01105.1"/>
    <property type="molecule type" value="Genomic_DNA"/>
</dbReference>
<dbReference type="RefSeq" id="NP_050631.1">
    <property type="nucleotide sequence ID" value="NC_000929.1"/>
</dbReference>
<dbReference type="GeneID" id="2636271"/>
<dbReference type="KEGG" id="vg:2636271"/>
<dbReference type="Proteomes" id="UP000002611">
    <property type="component" value="Genome"/>
</dbReference>
<dbReference type="GO" id="GO:0030430">
    <property type="term" value="C:host cell cytoplasm"/>
    <property type="evidence" value="ECO:0007669"/>
    <property type="project" value="UniProtKB-SubCell"/>
</dbReference>
<dbReference type="GO" id="GO:0003677">
    <property type="term" value="F:DNA binding"/>
    <property type="evidence" value="ECO:0007669"/>
    <property type="project" value="UniProtKB-KW"/>
</dbReference>
<dbReference type="GO" id="GO:0032359">
    <property type="term" value="P:provirus excision"/>
    <property type="evidence" value="ECO:0007669"/>
    <property type="project" value="UniProtKB-KW"/>
</dbReference>
<dbReference type="InterPro" id="IPR021874">
    <property type="entry name" value="Phage_Mu_Gp27"/>
</dbReference>
<dbReference type="Pfam" id="PF11985">
    <property type="entry name" value="Phage_Mu_Gp27"/>
    <property type="match status" value="1"/>
</dbReference>
<organism>
    <name type="scientific">Escherichia phage Mu</name>
    <name type="common">Bacteriophage Mu</name>
    <dbReference type="NCBI Taxonomy" id="2681603"/>
    <lineage>
        <taxon>Viruses</taxon>
        <taxon>Duplodnaviria</taxon>
        <taxon>Heunggongvirae</taxon>
        <taxon>Uroviricota</taxon>
        <taxon>Caudoviricetes</taxon>
        <taxon>Muvirus</taxon>
        <taxon>Muvirus mu</taxon>
    </lineage>
</organism>
<proteinExistence type="evidence at protein level"/>